<dbReference type="EMBL" id="BX936398">
    <property type="protein sequence ID" value="CAH22767.1"/>
    <property type="molecule type" value="Genomic_DNA"/>
</dbReference>
<dbReference type="RefSeq" id="WP_002210113.1">
    <property type="nucleotide sequence ID" value="NZ_CP009712.1"/>
</dbReference>
<dbReference type="SMR" id="Q665I8"/>
<dbReference type="GeneID" id="96663019"/>
<dbReference type="KEGG" id="ypo:BZ17_3072"/>
<dbReference type="KEGG" id="yps:YPTB3529"/>
<dbReference type="PATRIC" id="fig|273123.14.peg.3219"/>
<dbReference type="Proteomes" id="UP000001011">
    <property type="component" value="Chromosome"/>
</dbReference>
<dbReference type="GO" id="GO:0005524">
    <property type="term" value="F:ATP binding"/>
    <property type="evidence" value="ECO:0007669"/>
    <property type="project" value="UniProtKB-UniRule"/>
</dbReference>
<dbReference type="GO" id="GO:0005525">
    <property type="term" value="F:GTP binding"/>
    <property type="evidence" value="ECO:0007669"/>
    <property type="project" value="UniProtKB-UniRule"/>
</dbReference>
<dbReference type="GO" id="GO:0003723">
    <property type="term" value="F:RNA binding"/>
    <property type="evidence" value="ECO:0007669"/>
    <property type="project" value="UniProtKB-KW"/>
</dbReference>
<dbReference type="HAMAP" id="MF_00636">
    <property type="entry name" value="RapZ_like"/>
    <property type="match status" value="1"/>
</dbReference>
<dbReference type="InterPro" id="IPR027417">
    <property type="entry name" value="P-loop_NTPase"/>
</dbReference>
<dbReference type="InterPro" id="IPR005337">
    <property type="entry name" value="RapZ-like"/>
</dbReference>
<dbReference type="InterPro" id="IPR053930">
    <property type="entry name" value="RapZ-like_N"/>
</dbReference>
<dbReference type="InterPro" id="IPR053931">
    <property type="entry name" value="RapZ_C"/>
</dbReference>
<dbReference type="NCBIfam" id="NF003828">
    <property type="entry name" value="PRK05416.1"/>
    <property type="match status" value="1"/>
</dbReference>
<dbReference type="PANTHER" id="PTHR30448">
    <property type="entry name" value="RNASE ADAPTER PROTEIN RAPZ"/>
    <property type="match status" value="1"/>
</dbReference>
<dbReference type="PANTHER" id="PTHR30448:SF0">
    <property type="entry name" value="RNASE ADAPTER PROTEIN RAPZ"/>
    <property type="match status" value="1"/>
</dbReference>
<dbReference type="Pfam" id="PF22740">
    <property type="entry name" value="PapZ_C"/>
    <property type="match status" value="1"/>
</dbReference>
<dbReference type="Pfam" id="PF03668">
    <property type="entry name" value="RapZ-like_N"/>
    <property type="match status" value="1"/>
</dbReference>
<dbReference type="PIRSF" id="PIRSF005052">
    <property type="entry name" value="P-loopkin"/>
    <property type="match status" value="1"/>
</dbReference>
<dbReference type="SUPFAM" id="SSF52540">
    <property type="entry name" value="P-loop containing nucleoside triphosphate hydrolases"/>
    <property type="match status" value="1"/>
</dbReference>
<reference key="1">
    <citation type="journal article" date="2004" name="Proc. Natl. Acad. Sci. U.S.A.">
        <title>Insights into the evolution of Yersinia pestis through whole-genome comparison with Yersinia pseudotuberculosis.</title>
        <authorList>
            <person name="Chain P.S.G."/>
            <person name="Carniel E."/>
            <person name="Larimer F.W."/>
            <person name="Lamerdin J."/>
            <person name="Stoutland P.O."/>
            <person name="Regala W.M."/>
            <person name="Georgescu A.M."/>
            <person name="Vergez L.M."/>
            <person name="Land M.L."/>
            <person name="Motin V.L."/>
            <person name="Brubaker R.R."/>
            <person name="Fowler J."/>
            <person name="Hinnebusch J."/>
            <person name="Marceau M."/>
            <person name="Medigue C."/>
            <person name="Simonet M."/>
            <person name="Chenal-Francisque V."/>
            <person name="Souza B."/>
            <person name="Dacheux D."/>
            <person name="Elliott J.M."/>
            <person name="Derbise A."/>
            <person name="Hauser L.J."/>
            <person name="Garcia E."/>
        </authorList>
    </citation>
    <scope>NUCLEOTIDE SEQUENCE [LARGE SCALE GENOMIC DNA]</scope>
    <source>
        <strain>IP32953</strain>
    </source>
</reference>
<evidence type="ECO:0000255" key="1">
    <source>
        <dbReference type="HAMAP-Rule" id="MF_00636"/>
    </source>
</evidence>
<organism>
    <name type="scientific">Yersinia pseudotuberculosis serotype I (strain IP32953)</name>
    <dbReference type="NCBI Taxonomy" id="273123"/>
    <lineage>
        <taxon>Bacteria</taxon>
        <taxon>Pseudomonadati</taxon>
        <taxon>Pseudomonadota</taxon>
        <taxon>Gammaproteobacteria</taxon>
        <taxon>Enterobacterales</taxon>
        <taxon>Yersiniaceae</taxon>
        <taxon>Yersinia</taxon>
    </lineage>
</organism>
<accession>Q665I8</accession>
<feature type="chain" id="PRO_0000107795" description="RNase adapter protein RapZ">
    <location>
        <begin position="1"/>
        <end position="284"/>
    </location>
</feature>
<feature type="region of interest" description="RNA-binding" evidence="1">
    <location>
        <begin position="266"/>
        <end position="284"/>
    </location>
</feature>
<feature type="binding site" evidence="1">
    <location>
        <begin position="8"/>
        <end position="15"/>
    </location>
    <ligand>
        <name>ATP</name>
        <dbReference type="ChEBI" id="CHEBI:30616"/>
    </ligand>
</feature>
<feature type="binding site" evidence="1">
    <location>
        <begin position="56"/>
        <end position="59"/>
    </location>
    <ligand>
        <name>GTP</name>
        <dbReference type="ChEBI" id="CHEBI:37565"/>
    </ligand>
</feature>
<protein>
    <recommendedName>
        <fullName evidence="1">RNase adapter protein RapZ</fullName>
    </recommendedName>
</protein>
<keyword id="KW-0067">ATP-binding</keyword>
<keyword id="KW-0342">GTP-binding</keyword>
<keyword id="KW-0547">Nucleotide-binding</keyword>
<keyword id="KW-0694">RNA-binding</keyword>
<name>RAPZ_YERPS</name>
<proteinExistence type="inferred from homology"/>
<comment type="function">
    <text evidence="1">Modulates the synthesis of GlmS, by affecting the processing and stability of the regulatory small RNA GlmZ. When glucosamine-6-phosphate (GlcN6P) concentrations are high in the cell, RapZ binds GlmZ and targets it to cleavage by RNase E. Consequently, GlmZ is inactivated and unable to activate GlmS synthesis. Under low GlcN6P concentrations, RapZ is sequestered and inactivated by an other regulatory small RNA, GlmY, preventing GlmZ degradation and leading to synthesis of GlmS.</text>
</comment>
<comment type="subunit">
    <text evidence="1">Homotrimer.</text>
</comment>
<comment type="similarity">
    <text evidence="1">Belongs to the RapZ-like family. RapZ subfamily.</text>
</comment>
<sequence length="284" mass="32533">MVLMIVSGRSGSGKSVALRALEDMGFYCVDNLPVVLLPQLASTLADRNISAAVSIDVRNMPESPEVFEHAMTQLPDSFSPQLLFLDADRNTLIRRYSDTRRLHPLSAKNLSLESAIDEESDLLEPLRSRADLIIDTSEMSVHELAEMLRTRLLGKRERELTMVFESFGFKHGIPIDADYVFDVRFLPNPHWDPKLRPMTGLDKPVISFLDRHTEVHNFIYQTRSYLEQWLPMLETNNRSYLTVAIGCTGGKHRSVYVAEQLADYFRARGKNVQSRHRTLEKRKQ</sequence>
<gene>
    <name evidence="1" type="primary">rapZ</name>
    <name type="ordered locus">YPTB3529</name>
</gene>